<dbReference type="EC" id="2.4.1.-" evidence="5"/>
<dbReference type="EMBL" id="KY906047">
    <property type="protein sequence ID" value="ARJ31411.1"/>
    <property type="molecule type" value="mRNA"/>
</dbReference>
<dbReference type="EMBL" id="AC074111">
    <property type="status" value="NOT_ANNOTATED_CDS"/>
    <property type="molecule type" value="Genomic_DNA"/>
</dbReference>
<dbReference type="EMBL" id="CP002684">
    <property type="protein sequence ID" value="AEE31900.1"/>
    <property type="molecule type" value="Genomic_DNA"/>
</dbReference>
<dbReference type="EMBL" id="BT002394">
    <property type="protein sequence ID" value="AAO00754.1"/>
    <property type="molecule type" value="mRNA"/>
</dbReference>
<dbReference type="RefSeq" id="NP_683362.1">
    <property type="nucleotide sequence ID" value="NM_148521.3"/>
</dbReference>
<dbReference type="FunCoup" id="Q8GUM0">
    <property type="interactions" value="34"/>
</dbReference>
<dbReference type="GlyCosmos" id="Q8GUM0">
    <property type="glycosylation" value="6 sites, No reported glycans"/>
</dbReference>
<dbReference type="GlyGen" id="Q8GUM0">
    <property type="glycosylation" value="6 sites"/>
</dbReference>
<dbReference type="PaxDb" id="3702-AT1G38131.1"/>
<dbReference type="ProteomicsDB" id="250891"/>
<dbReference type="EnsemblPlants" id="AT1G38131.1">
    <property type="protein sequence ID" value="AT1G38131.1"/>
    <property type="gene ID" value="AT1G38131"/>
</dbReference>
<dbReference type="GeneID" id="840652"/>
<dbReference type="Gramene" id="AT1G38131.1">
    <property type="protein sequence ID" value="AT1G38131.1"/>
    <property type="gene ID" value="AT1G38131"/>
</dbReference>
<dbReference type="KEGG" id="ath:AT1G38131"/>
<dbReference type="Araport" id="AT1G38131"/>
<dbReference type="TAIR" id="AT1G38131"/>
<dbReference type="eggNOG" id="ENOG502QS83">
    <property type="taxonomic scope" value="Eukaryota"/>
</dbReference>
<dbReference type="HOGENOM" id="CLU_018420_8_1_1"/>
<dbReference type="InParanoid" id="Q8GUM0"/>
<dbReference type="OMA" id="HNYNMSN"/>
<dbReference type="PhylomeDB" id="Q8GUM0"/>
<dbReference type="PRO" id="PR:Q8GUM0"/>
<dbReference type="Proteomes" id="UP000006548">
    <property type="component" value="Chromosome 1"/>
</dbReference>
<dbReference type="ExpressionAtlas" id="Q8GUM0">
    <property type="expression patterns" value="baseline and differential"/>
</dbReference>
<dbReference type="GO" id="GO:0016020">
    <property type="term" value="C:membrane"/>
    <property type="evidence" value="ECO:0007669"/>
    <property type="project" value="UniProtKB-SubCell"/>
</dbReference>
<dbReference type="GO" id="GO:0016757">
    <property type="term" value="F:glycosyltransferase activity"/>
    <property type="evidence" value="ECO:0007669"/>
    <property type="project" value="UniProtKB-KW"/>
</dbReference>
<dbReference type="GO" id="GO:0006004">
    <property type="term" value="P:fucose metabolic process"/>
    <property type="evidence" value="ECO:0007669"/>
    <property type="project" value="UniProtKB-KW"/>
</dbReference>
<dbReference type="CDD" id="cd11299">
    <property type="entry name" value="O-FucT_plant"/>
    <property type="match status" value="1"/>
</dbReference>
<dbReference type="InterPro" id="IPR024709">
    <property type="entry name" value="FucosylTrfase_pln"/>
</dbReference>
<dbReference type="InterPro" id="IPR019378">
    <property type="entry name" value="GDP-Fuc_O-FucTrfase"/>
</dbReference>
<dbReference type="PANTHER" id="PTHR31288:SF8">
    <property type="entry name" value="O-FUCOSYLTRANSFERASE 10-RELATED"/>
    <property type="match status" value="1"/>
</dbReference>
<dbReference type="PANTHER" id="PTHR31288">
    <property type="entry name" value="O-FUCOSYLTRANSFERASE FAMILY PROTEIN"/>
    <property type="match status" value="1"/>
</dbReference>
<dbReference type="Pfam" id="PF10250">
    <property type="entry name" value="O-FucT"/>
    <property type="match status" value="1"/>
</dbReference>
<dbReference type="PIRSF" id="PIRSF009360">
    <property type="entry name" value="UCP009360"/>
    <property type="match status" value="1"/>
</dbReference>
<accession>Q8GUM0</accession>
<name>OFT11_ARATH</name>
<comment type="pathway">
    <text evidence="5">Glycan metabolism.</text>
</comment>
<comment type="subcellular location">
    <subcellularLocation>
        <location evidence="2">Membrane</location>
        <topology evidence="5">Single-pass type II membrane protein</topology>
    </subcellularLocation>
</comment>
<comment type="similarity">
    <text evidence="5">Belongs to the glycosyltransferase GT106 family.</text>
</comment>
<reference key="1">
    <citation type="submission" date="2017-04" db="EMBL/GenBank/DDBJ databases">
        <title>Arabidopsis glycosyltransferases: an update.</title>
        <authorList>
            <person name="Zeng W."/>
            <person name="Gluza P."/>
            <person name="Heazlewood J."/>
        </authorList>
    </citation>
    <scope>NUCLEOTIDE SEQUENCE [MRNA]</scope>
    <source>
        <strain>cv. Columbia</strain>
    </source>
</reference>
<reference key="2">
    <citation type="journal article" date="2000" name="Nature">
        <title>Sequence and analysis of chromosome 1 of the plant Arabidopsis thaliana.</title>
        <authorList>
            <person name="Theologis A."/>
            <person name="Ecker J.R."/>
            <person name="Palm C.J."/>
            <person name="Federspiel N.A."/>
            <person name="Kaul S."/>
            <person name="White O."/>
            <person name="Alonso J."/>
            <person name="Altafi H."/>
            <person name="Araujo R."/>
            <person name="Bowman C.L."/>
            <person name="Brooks S.Y."/>
            <person name="Buehler E."/>
            <person name="Chan A."/>
            <person name="Chao Q."/>
            <person name="Chen H."/>
            <person name="Cheuk R.F."/>
            <person name="Chin C.W."/>
            <person name="Chung M.K."/>
            <person name="Conn L."/>
            <person name="Conway A.B."/>
            <person name="Conway A.R."/>
            <person name="Creasy T.H."/>
            <person name="Dewar K."/>
            <person name="Dunn P."/>
            <person name="Etgu P."/>
            <person name="Feldblyum T.V."/>
            <person name="Feng J.-D."/>
            <person name="Fong B."/>
            <person name="Fujii C.Y."/>
            <person name="Gill J.E."/>
            <person name="Goldsmith A.D."/>
            <person name="Haas B."/>
            <person name="Hansen N.F."/>
            <person name="Hughes B."/>
            <person name="Huizar L."/>
            <person name="Hunter J.L."/>
            <person name="Jenkins J."/>
            <person name="Johnson-Hopson C."/>
            <person name="Khan S."/>
            <person name="Khaykin E."/>
            <person name="Kim C.J."/>
            <person name="Koo H.L."/>
            <person name="Kremenetskaia I."/>
            <person name="Kurtz D.B."/>
            <person name="Kwan A."/>
            <person name="Lam B."/>
            <person name="Langin-Hooper S."/>
            <person name="Lee A."/>
            <person name="Lee J.M."/>
            <person name="Lenz C.A."/>
            <person name="Li J.H."/>
            <person name="Li Y.-P."/>
            <person name="Lin X."/>
            <person name="Liu S.X."/>
            <person name="Liu Z.A."/>
            <person name="Luros J.S."/>
            <person name="Maiti R."/>
            <person name="Marziali A."/>
            <person name="Militscher J."/>
            <person name="Miranda M."/>
            <person name="Nguyen M."/>
            <person name="Nierman W.C."/>
            <person name="Osborne B.I."/>
            <person name="Pai G."/>
            <person name="Peterson J."/>
            <person name="Pham P.K."/>
            <person name="Rizzo M."/>
            <person name="Rooney T."/>
            <person name="Rowley D."/>
            <person name="Sakano H."/>
            <person name="Salzberg S.L."/>
            <person name="Schwartz J.R."/>
            <person name="Shinn P."/>
            <person name="Southwick A.M."/>
            <person name="Sun H."/>
            <person name="Tallon L.J."/>
            <person name="Tambunga G."/>
            <person name="Toriumi M.J."/>
            <person name="Town C.D."/>
            <person name="Utterback T."/>
            <person name="Van Aken S."/>
            <person name="Vaysberg M."/>
            <person name="Vysotskaia V.S."/>
            <person name="Walker M."/>
            <person name="Wu D."/>
            <person name="Yu G."/>
            <person name="Fraser C.M."/>
            <person name="Venter J.C."/>
            <person name="Davis R.W."/>
        </authorList>
    </citation>
    <scope>NUCLEOTIDE SEQUENCE [LARGE SCALE GENOMIC DNA]</scope>
    <source>
        <strain>cv. Columbia</strain>
    </source>
</reference>
<reference key="3">
    <citation type="journal article" date="2017" name="Plant J.">
        <title>Araport11: a complete reannotation of the Arabidopsis thaliana reference genome.</title>
        <authorList>
            <person name="Cheng C.Y."/>
            <person name="Krishnakumar V."/>
            <person name="Chan A.P."/>
            <person name="Thibaud-Nissen F."/>
            <person name="Schobel S."/>
            <person name="Town C.D."/>
        </authorList>
    </citation>
    <scope>GENOME REANNOTATION</scope>
    <source>
        <strain>cv. Columbia</strain>
    </source>
</reference>
<reference key="4">
    <citation type="journal article" date="2003" name="Science">
        <title>Empirical analysis of transcriptional activity in the Arabidopsis genome.</title>
        <authorList>
            <person name="Yamada K."/>
            <person name="Lim J."/>
            <person name="Dale J.M."/>
            <person name="Chen H."/>
            <person name="Shinn P."/>
            <person name="Palm C.J."/>
            <person name="Southwick A.M."/>
            <person name="Wu H.C."/>
            <person name="Kim C.J."/>
            <person name="Nguyen M."/>
            <person name="Pham P.K."/>
            <person name="Cheuk R.F."/>
            <person name="Karlin-Newmann G."/>
            <person name="Liu S.X."/>
            <person name="Lam B."/>
            <person name="Sakano H."/>
            <person name="Wu T."/>
            <person name="Yu G."/>
            <person name="Miranda M."/>
            <person name="Quach H.L."/>
            <person name="Tripp M."/>
            <person name="Chang C.H."/>
            <person name="Lee J.M."/>
            <person name="Toriumi M.J."/>
            <person name="Chan M.M."/>
            <person name="Tang C.C."/>
            <person name="Onodera C.S."/>
            <person name="Deng J.M."/>
            <person name="Akiyama K."/>
            <person name="Ansari Y."/>
            <person name="Arakawa T."/>
            <person name="Banh J."/>
            <person name="Banno F."/>
            <person name="Bowser L."/>
            <person name="Brooks S.Y."/>
            <person name="Carninci P."/>
            <person name="Chao Q."/>
            <person name="Choy N."/>
            <person name="Enju A."/>
            <person name="Goldsmith A.D."/>
            <person name="Gurjal M."/>
            <person name="Hansen N.F."/>
            <person name="Hayashizaki Y."/>
            <person name="Johnson-Hopson C."/>
            <person name="Hsuan V.W."/>
            <person name="Iida K."/>
            <person name="Karnes M."/>
            <person name="Khan S."/>
            <person name="Koesema E."/>
            <person name="Ishida J."/>
            <person name="Jiang P.X."/>
            <person name="Jones T."/>
            <person name="Kawai J."/>
            <person name="Kamiya A."/>
            <person name="Meyers C."/>
            <person name="Nakajima M."/>
            <person name="Narusaka M."/>
            <person name="Seki M."/>
            <person name="Sakurai T."/>
            <person name="Satou M."/>
            <person name="Tamse R."/>
            <person name="Vaysberg M."/>
            <person name="Wallender E.K."/>
            <person name="Wong C."/>
            <person name="Yamamura Y."/>
            <person name="Yuan S."/>
            <person name="Shinozaki K."/>
            <person name="Davis R.W."/>
            <person name="Theologis A."/>
            <person name="Ecker J.R."/>
        </authorList>
    </citation>
    <scope>NUCLEOTIDE SEQUENCE [LARGE SCALE MRNA]</scope>
    <source>
        <strain>cv. Columbia</strain>
    </source>
</reference>
<reference key="5">
    <citation type="journal article" date="2012" name="Front. Plant Sci.">
        <title>Plant glycosyltransferases beyond CAZy: a perspective on DUF families.</title>
        <authorList>
            <person name="Hansen S.F."/>
            <person name="Harholt J."/>
            <person name="Oikawa A."/>
            <person name="Scheller H.V."/>
        </authorList>
    </citation>
    <scope>GENE FAMILY</scope>
    <scope>REVIEW</scope>
</reference>
<reference key="6">
    <citation type="journal article" date="2012" name="PLoS ONE">
        <title>The FRIABLE1 gene product affects cell adhesion in Arabidopsis.</title>
        <authorList>
            <person name="Neumetzler L."/>
            <person name="Humphrey T."/>
            <person name="Lumba S."/>
            <person name="Snyder S."/>
            <person name="Yeats T.H."/>
            <person name="Usadel B."/>
            <person name="Vasilevski A."/>
            <person name="Patel J."/>
            <person name="Rose J.K."/>
            <person name="Persson S."/>
            <person name="Bonetta D."/>
        </authorList>
    </citation>
    <scope>GENE FAMILY</scope>
</reference>
<reference key="7">
    <citation type="journal article" date="2012" name="PLoS ONE">
        <title>Identification of putative rhamnogalacturonan-II specific glycosyltransferases in Arabidopsis using a combination of bioinformatics approaches.</title>
        <authorList>
            <person name="Voxeur A."/>
            <person name="Andre A."/>
            <person name="Breton C."/>
            <person name="Lerouge P."/>
        </authorList>
    </citation>
    <scope>GENE FAMILY</scope>
</reference>
<reference key="8">
    <citation type="journal article" date="2013" name="Plant J.">
        <title>Identification of an additional protein involved in mannan biosynthesis.</title>
        <authorList>
            <person name="Wang Y."/>
            <person name="Mortimer J.C."/>
            <person name="Davis J."/>
            <person name="Dupree P."/>
            <person name="Keegstra K."/>
        </authorList>
    </citation>
    <scope>GENE FAMILY</scope>
</reference>
<reference key="9">
    <citation type="journal article" date="2014" name="Plant J.">
        <title>The plant glycosyltransferase clone collection for functional genomics.</title>
        <authorList>
            <person name="Lao J."/>
            <person name="Oikawa A."/>
            <person name="Bromley J.R."/>
            <person name="McInerney P."/>
            <person name="Suttangkakul A."/>
            <person name="Smith-Moritz A.M."/>
            <person name="Plahar H."/>
            <person name="Chiu T.-Y."/>
            <person name="Gonzalez Fernandez-Nino S.M.G."/>
            <person name="Ebert B."/>
            <person name="Yang F."/>
            <person name="Christiansen K.M."/>
            <person name="Hansen S.F."/>
            <person name="Stonebloom S."/>
            <person name="Adams P.D."/>
            <person name="Ronald P.C."/>
            <person name="Hillson N.J."/>
            <person name="Hadi M.Z."/>
            <person name="Vega-Sanchez M.E."/>
            <person name="Loque D."/>
            <person name="Scheller H.V."/>
            <person name="Heazlewood J.L."/>
        </authorList>
    </citation>
    <scope>WEB RESOURCE</scope>
</reference>
<proteinExistence type="evidence at transcript level"/>
<sequence length="589" mass="66493">MKSKIHHQPNGSNNGVVSSNDNGCRSESPSPPLSPNRRVLRRQRRQTLLRASSFSLRRNLRYLLLLPMIYASGLLMCVGPFSGLVGWVYVPGSVYRSPEIYRKLKDDIFSDNSTALELSSVWKFKRRPKMPKPCPNSTVSSHFGLNRESSALAPSSGYLIVEANGGLNQQRSAICNAVAVAGLLNAVLVIPRFEFHAIWKDSSNFGDIYDEDHFISSLEGYVKIVRDVPDEIMTRFSYNVSSIPTIRVQAWATVNYYNGEVYPVLKEHGVIRITPFANRLAMSVPPYIQLLRCIANYKALKFSSPISTLAEKLVDRMVEKSSATGGKYVSVHLRFEEDMVAFSCCLYEGGRAEKSEMDVIRQKSWKGKFKRRDRVIRPDLNRVNGKCPLTPLEVGMMLRGMGFDNNTSIYLASGRIYQPEKHLAPLQEMFPRLYTKESLATPEELAPFQGYSSRMAALDYTVSLLSEVFVTTQGGNFPHFLMGHRRFLFGGHAKTVIPDKPKLVLLLQDMEMRWEVFKKEMKLMLGESDRKGVMVPRVRKINRKTSIYTYPLPECECIFHLSSNFSNTGNILSLGALHPSSNLISSARL</sequence>
<keyword id="KW-0119">Carbohydrate metabolism</keyword>
<keyword id="KW-0294">Fucose metabolism</keyword>
<keyword id="KW-0325">Glycoprotein</keyword>
<keyword id="KW-0328">Glycosyltransferase</keyword>
<keyword id="KW-0472">Membrane</keyword>
<keyword id="KW-1185">Reference proteome</keyword>
<keyword id="KW-0735">Signal-anchor</keyword>
<keyword id="KW-0808">Transferase</keyword>
<keyword id="KW-0812">Transmembrane</keyword>
<keyword id="KW-1133">Transmembrane helix</keyword>
<evidence type="ECO:0000250" key="1">
    <source>
        <dbReference type="UniProtKB" id="Q9H488"/>
    </source>
</evidence>
<evidence type="ECO:0000255" key="2"/>
<evidence type="ECO:0000255" key="3">
    <source>
        <dbReference type="PROSITE-ProRule" id="PRU00498"/>
    </source>
</evidence>
<evidence type="ECO:0000256" key="4">
    <source>
        <dbReference type="SAM" id="MobiDB-lite"/>
    </source>
</evidence>
<evidence type="ECO:0000305" key="5"/>
<evidence type="ECO:0000312" key="6">
    <source>
        <dbReference type="Araport" id="AT1G38131"/>
    </source>
</evidence>
<evidence type="ECO:0000312" key="7">
    <source>
        <dbReference type="EMBL" id="AC074111"/>
    </source>
</evidence>
<evidence type="ECO:0000312" key="8">
    <source>
        <dbReference type="EMBL" id="ARJ31411.1"/>
    </source>
</evidence>
<gene>
    <name evidence="5" type="primary">OFUT11</name>
    <name evidence="6" type="ordered locus">At1g38131</name>
    <name evidence="7" type="ORF">T18N24</name>
</gene>
<protein>
    <recommendedName>
        <fullName evidence="5">O-fucosyltransferase 11</fullName>
        <shortName evidence="5">O-FucT-11</shortName>
        <ecNumber evidence="5">2.4.1.-</ecNumber>
    </recommendedName>
    <alternativeName>
        <fullName evidence="8">O-fucosyltransferase family protein</fullName>
    </alternativeName>
</protein>
<organism>
    <name type="scientific">Arabidopsis thaliana</name>
    <name type="common">Mouse-ear cress</name>
    <dbReference type="NCBI Taxonomy" id="3702"/>
    <lineage>
        <taxon>Eukaryota</taxon>
        <taxon>Viridiplantae</taxon>
        <taxon>Streptophyta</taxon>
        <taxon>Embryophyta</taxon>
        <taxon>Tracheophyta</taxon>
        <taxon>Spermatophyta</taxon>
        <taxon>Magnoliopsida</taxon>
        <taxon>eudicotyledons</taxon>
        <taxon>Gunneridae</taxon>
        <taxon>Pentapetalae</taxon>
        <taxon>rosids</taxon>
        <taxon>malvids</taxon>
        <taxon>Brassicales</taxon>
        <taxon>Brassicaceae</taxon>
        <taxon>Camelineae</taxon>
        <taxon>Arabidopsis</taxon>
    </lineage>
</organism>
<feature type="chain" id="PRO_0000442074" description="O-fucosyltransferase 11">
    <location>
        <begin position="1"/>
        <end position="589"/>
    </location>
</feature>
<feature type="transmembrane region" description="Helical; Signal-anchor for type II membrane protein" evidence="5">
    <location>
        <begin position="68"/>
        <end position="88"/>
    </location>
</feature>
<feature type="region of interest" description="Disordered" evidence="4">
    <location>
        <begin position="1"/>
        <end position="37"/>
    </location>
</feature>
<feature type="compositionally biased region" description="Low complexity" evidence="4">
    <location>
        <begin position="10"/>
        <end position="23"/>
    </location>
</feature>
<feature type="binding site" evidence="1">
    <location>
        <begin position="332"/>
        <end position="334"/>
    </location>
    <ligand>
        <name>substrate</name>
    </ligand>
</feature>
<feature type="glycosylation site" description="N-linked (GlcNAc...) asparagine" evidence="3">
    <location>
        <position position="112"/>
    </location>
</feature>
<feature type="glycosylation site" description="N-linked (GlcNAc...) asparagine" evidence="3">
    <location>
        <position position="136"/>
    </location>
</feature>
<feature type="glycosylation site" description="N-linked (GlcNAc...) asparagine" evidence="3">
    <location>
        <position position="239"/>
    </location>
</feature>
<feature type="glycosylation site" description="N-linked (GlcNAc...) asparagine" evidence="3">
    <location>
        <position position="405"/>
    </location>
</feature>
<feature type="glycosylation site" description="N-linked (GlcNAc...) asparagine" evidence="3">
    <location>
        <position position="406"/>
    </location>
</feature>
<feature type="glycosylation site" description="N-linked (GlcNAc...) asparagine" evidence="3">
    <location>
        <position position="564"/>
    </location>
</feature>